<gene>
    <name evidence="1" type="primary">rpmD</name>
    <name type="ordered locus">Cpar_0195</name>
</gene>
<evidence type="ECO:0000255" key="1">
    <source>
        <dbReference type="HAMAP-Rule" id="MF_01371"/>
    </source>
</evidence>
<evidence type="ECO:0000305" key="2"/>
<feature type="chain" id="PRO_1000144661" description="Large ribosomal subunit protein uL30">
    <location>
        <begin position="1"/>
        <end position="61"/>
    </location>
</feature>
<proteinExistence type="inferred from homology"/>
<sequence>MSEKMLQVTQVRSVIGGTKKQKATIKALGLGRPNHKVQIKDNPCSRGQIRVVQHLVKVEEL</sequence>
<accession>B3QR89</accession>
<name>RL30_CHLP8</name>
<protein>
    <recommendedName>
        <fullName evidence="1">Large ribosomal subunit protein uL30</fullName>
    </recommendedName>
    <alternativeName>
        <fullName evidence="2">50S ribosomal protein L30</fullName>
    </alternativeName>
</protein>
<organism>
    <name type="scientific">Chlorobaculum parvum (strain DSM 263 / NCIMB 8327)</name>
    <name type="common">Chlorobium vibrioforme subsp. thiosulfatophilum</name>
    <dbReference type="NCBI Taxonomy" id="517417"/>
    <lineage>
        <taxon>Bacteria</taxon>
        <taxon>Pseudomonadati</taxon>
        <taxon>Chlorobiota</taxon>
        <taxon>Chlorobiia</taxon>
        <taxon>Chlorobiales</taxon>
        <taxon>Chlorobiaceae</taxon>
        <taxon>Chlorobaculum</taxon>
    </lineage>
</organism>
<keyword id="KW-0687">Ribonucleoprotein</keyword>
<keyword id="KW-0689">Ribosomal protein</keyword>
<dbReference type="EMBL" id="CP001099">
    <property type="protein sequence ID" value="ACF10622.1"/>
    <property type="molecule type" value="Genomic_DNA"/>
</dbReference>
<dbReference type="RefSeq" id="WP_012501457.1">
    <property type="nucleotide sequence ID" value="NC_011027.1"/>
</dbReference>
<dbReference type="SMR" id="B3QR89"/>
<dbReference type="STRING" id="517417.Cpar_0195"/>
<dbReference type="KEGG" id="cpc:Cpar_0195"/>
<dbReference type="eggNOG" id="COG1841">
    <property type="taxonomic scope" value="Bacteria"/>
</dbReference>
<dbReference type="HOGENOM" id="CLU_131047_2_0_10"/>
<dbReference type="OrthoDB" id="9812790at2"/>
<dbReference type="Proteomes" id="UP000008811">
    <property type="component" value="Chromosome"/>
</dbReference>
<dbReference type="GO" id="GO:0022625">
    <property type="term" value="C:cytosolic large ribosomal subunit"/>
    <property type="evidence" value="ECO:0007669"/>
    <property type="project" value="TreeGrafter"/>
</dbReference>
<dbReference type="GO" id="GO:0003735">
    <property type="term" value="F:structural constituent of ribosome"/>
    <property type="evidence" value="ECO:0007669"/>
    <property type="project" value="InterPro"/>
</dbReference>
<dbReference type="GO" id="GO:0006412">
    <property type="term" value="P:translation"/>
    <property type="evidence" value="ECO:0007669"/>
    <property type="project" value="UniProtKB-UniRule"/>
</dbReference>
<dbReference type="CDD" id="cd01658">
    <property type="entry name" value="Ribosomal_L30"/>
    <property type="match status" value="1"/>
</dbReference>
<dbReference type="Gene3D" id="3.30.1390.20">
    <property type="entry name" value="Ribosomal protein L30, ferredoxin-like fold domain"/>
    <property type="match status" value="1"/>
</dbReference>
<dbReference type="HAMAP" id="MF_01371_B">
    <property type="entry name" value="Ribosomal_uL30_B"/>
    <property type="match status" value="1"/>
</dbReference>
<dbReference type="InterPro" id="IPR036919">
    <property type="entry name" value="Ribo_uL30_ferredoxin-like_sf"/>
</dbReference>
<dbReference type="InterPro" id="IPR005996">
    <property type="entry name" value="Ribosomal_uL30_bac-type"/>
</dbReference>
<dbReference type="InterPro" id="IPR016082">
    <property type="entry name" value="Ribosomal_uL30_ferredoxin-like"/>
</dbReference>
<dbReference type="NCBIfam" id="TIGR01308">
    <property type="entry name" value="rpmD_bact"/>
    <property type="match status" value="1"/>
</dbReference>
<dbReference type="PANTHER" id="PTHR15892:SF2">
    <property type="entry name" value="LARGE RIBOSOMAL SUBUNIT PROTEIN UL30M"/>
    <property type="match status" value="1"/>
</dbReference>
<dbReference type="PANTHER" id="PTHR15892">
    <property type="entry name" value="MITOCHONDRIAL RIBOSOMAL PROTEIN L30"/>
    <property type="match status" value="1"/>
</dbReference>
<dbReference type="Pfam" id="PF00327">
    <property type="entry name" value="Ribosomal_L30"/>
    <property type="match status" value="1"/>
</dbReference>
<dbReference type="PIRSF" id="PIRSF002211">
    <property type="entry name" value="Ribosomal_L30_bac-type"/>
    <property type="match status" value="1"/>
</dbReference>
<dbReference type="SUPFAM" id="SSF55129">
    <property type="entry name" value="Ribosomal protein L30p/L7e"/>
    <property type="match status" value="1"/>
</dbReference>
<reference key="1">
    <citation type="submission" date="2008-06" db="EMBL/GenBank/DDBJ databases">
        <title>Complete sequence of Chlorobaculum parvum NCIB 8327.</title>
        <authorList>
            <consortium name="US DOE Joint Genome Institute"/>
            <person name="Lucas S."/>
            <person name="Copeland A."/>
            <person name="Lapidus A."/>
            <person name="Glavina del Rio T."/>
            <person name="Dalin E."/>
            <person name="Tice H."/>
            <person name="Bruce D."/>
            <person name="Goodwin L."/>
            <person name="Pitluck S."/>
            <person name="Schmutz J."/>
            <person name="Larimer F."/>
            <person name="Land M."/>
            <person name="Hauser L."/>
            <person name="Kyrpides N."/>
            <person name="Mikhailova N."/>
            <person name="Zhao F."/>
            <person name="Li T."/>
            <person name="Liu Z."/>
            <person name="Overmann J."/>
            <person name="Bryant D.A."/>
            <person name="Richardson P."/>
        </authorList>
    </citation>
    <scope>NUCLEOTIDE SEQUENCE [LARGE SCALE GENOMIC DNA]</scope>
    <source>
        <strain>DSM 263 / NCIMB 8327</strain>
    </source>
</reference>
<comment type="subunit">
    <text evidence="1">Part of the 50S ribosomal subunit.</text>
</comment>
<comment type="similarity">
    <text evidence="1">Belongs to the universal ribosomal protein uL30 family.</text>
</comment>